<dbReference type="EC" id="1.13.11.6" evidence="1"/>
<dbReference type="EMBL" id="BA000051">
    <property type="protein sequence ID" value="BAE58876.1"/>
    <property type="molecule type" value="Genomic_DNA"/>
</dbReference>
<dbReference type="RefSeq" id="XP_001820878.1">
    <property type="nucleotide sequence ID" value="XM_001820826.2"/>
</dbReference>
<dbReference type="SMR" id="Q2UHT9"/>
<dbReference type="STRING" id="510516.Q2UHT9"/>
<dbReference type="EnsemblFungi" id="BAE58876">
    <property type="protein sequence ID" value="BAE58876"/>
    <property type="gene ID" value="AO090023000314"/>
</dbReference>
<dbReference type="GeneID" id="5992880"/>
<dbReference type="KEGG" id="aor:AO090023000314"/>
<dbReference type="VEuPathDB" id="FungiDB:AO090023000314"/>
<dbReference type="HOGENOM" id="CLU_095765_0_0_1"/>
<dbReference type="OMA" id="KPPVGNQ"/>
<dbReference type="OrthoDB" id="6316at5052"/>
<dbReference type="UniPathway" id="UPA00253">
    <property type="reaction ID" value="UER00330"/>
</dbReference>
<dbReference type="Proteomes" id="UP000006564">
    <property type="component" value="Chromosome 3"/>
</dbReference>
<dbReference type="GO" id="GO:0005737">
    <property type="term" value="C:cytoplasm"/>
    <property type="evidence" value="ECO:0007669"/>
    <property type="project" value="UniProtKB-SubCell"/>
</dbReference>
<dbReference type="GO" id="GO:0000334">
    <property type="term" value="F:3-hydroxyanthranilate 3,4-dioxygenase activity"/>
    <property type="evidence" value="ECO:0007669"/>
    <property type="project" value="UniProtKB-UniRule"/>
</dbReference>
<dbReference type="GO" id="GO:0008198">
    <property type="term" value="F:ferrous iron binding"/>
    <property type="evidence" value="ECO:0007669"/>
    <property type="project" value="UniProtKB-UniRule"/>
</dbReference>
<dbReference type="GO" id="GO:0034354">
    <property type="term" value="P:'de novo' NAD biosynthetic process from L-tryptophan"/>
    <property type="evidence" value="ECO:0007669"/>
    <property type="project" value="UniProtKB-UniRule"/>
</dbReference>
<dbReference type="GO" id="GO:0043420">
    <property type="term" value="P:anthranilate metabolic process"/>
    <property type="evidence" value="ECO:0007669"/>
    <property type="project" value="UniProtKB-UniRule"/>
</dbReference>
<dbReference type="GO" id="GO:0006569">
    <property type="term" value="P:L-tryptophan catabolic process"/>
    <property type="evidence" value="ECO:0007669"/>
    <property type="project" value="UniProtKB-UniRule"/>
</dbReference>
<dbReference type="GO" id="GO:0019805">
    <property type="term" value="P:quinolinate biosynthetic process"/>
    <property type="evidence" value="ECO:0007669"/>
    <property type="project" value="UniProtKB-UniRule"/>
</dbReference>
<dbReference type="CDD" id="cd06123">
    <property type="entry name" value="cupin_HAO"/>
    <property type="match status" value="1"/>
</dbReference>
<dbReference type="FunFam" id="2.60.120.10:FF:000093">
    <property type="entry name" value="3-hydroxyanthranilate 3,4-dioxygenase"/>
    <property type="match status" value="1"/>
</dbReference>
<dbReference type="Gene3D" id="2.60.120.10">
    <property type="entry name" value="Jelly Rolls"/>
    <property type="match status" value="1"/>
</dbReference>
<dbReference type="HAMAP" id="MF_00825">
    <property type="entry name" value="3_HAO"/>
    <property type="match status" value="1"/>
</dbReference>
<dbReference type="InterPro" id="IPR010329">
    <property type="entry name" value="3hydroanth_dOase"/>
</dbReference>
<dbReference type="InterPro" id="IPR014710">
    <property type="entry name" value="RmlC-like_jellyroll"/>
</dbReference>
<dbReference type="InterPro" id="IPR011051">
    <property type="entry name" value="RmlC_Cupin_sf"/>
</dbReference>
<dbReference type="NCBIfam" id="TIGR03037">
    <property type="entry name" value="anthran_nbaC"/>
    <property type="match status" value="1"/>
</dbReference>
<dbReference type="PANTHER" id="PTHR15497">
    <property type="entry name" value="3-HYDROXYANTHRANILATE 3,4-DIOXYGENASE"/>
    <property type="match status" value="1"/>
</dbReference>
<dbReference type="PANTHER" id="PTHR15497:SF1">
    <property type="entry name" value="3-HYDROXYANTHRANILATE 3,4-DIOXYGENASE"/>
    <property type="match status" value="1"/>
</dbReference>
<dbReference type="Pfam" id="PF06052">
    <property type="entry name" value="3-HAO"/>
    <property type="match status" value="1"/>
</dbReference>
<dbReference type="SUPFAM" id="SSF51182">
    <property type="entry name" value="RmlC-like cupins"/>
    <property type="match status" value="1"/>
</dbReference>
<protein>
    <recommendedName>
        <fullName evidence="1">3-hydroxyanthranilate 3,4-dioxygenase 1</fullName>
        <ecNumber evidence="1">1.13.11.6</ecNumber>
    </recommendedName>
    <alternativeName>
        <fullName evidence="1">3-hydroxyanthranilate oxygenase 1</fullName>
        <shortName evidence="1">3-HAO-1</shortName>
    </alternativeName>
    <alternativeName>
        <fullName evidence="1">3-hydroxyanthranilic acid dioxygenase 1</fullName>
        <shortName evidence="1">HAD-1</shortName>
    </alternativeName>
    <alternativeName>
        <fullName evidence="1">Biosynthesis of nicotinic acid protein 1-1</fullName>
    </alternativeName>
</protein>
<name>3HAO1_ASPOR</name>
<comment type="function">
    <text evidence="1">Catalyzes the oxidative ring opening of 3-hydroxyanthranilate to 2-amino-3-carboxymuconate semialdehyde, which spontaneously cyclizes to quinolinate.</text>
</comment>
<comment type="catalytic activity">
    <reaction evidence="1">
        <text>3-hydroxyanthranilate + O2 = (2Z,4Z)-2-amino-3-carboxymuconate 6-semialdehyde</text>
        <dbReference type="Rhea" id="RHEA:17953"/>
        <dbReference type="ChEBI" id="CHEBI:15379"/>
        <dbReference type="ChEBI" id="CHEBI:36559"/>
        <dbReference type="ChEBI" id="CHEBI:77612"/>
        <dbReference type="EC" id="1.13.11.6"/>
    </reaction>
</comment>
<comment type="cofactor">
    <cofactor evidence="1">
        <name>Fe(2+)</name>
        <dbReference type="ChEBI" id="CHEBI:29033"/>
    </cofactor>
</comment>
<comment type="pathway">
    <text evidence="1">Cofactor biosynthesis; NAD(+) biosynthesis; quinolinate from L-kynurenine: step 3/3.</text>
</comment>
<comment type="subcellular location">
    <subcellularLocation>
        <location evidence="1">Cytoplasm</location>
    </subcellularLocation>
</comment>
<comment type="similarity">
    <text evidence="1">Belongs to the 3-HAO family.</text>
</comment>
<gene>
    <name type="primary">bna1-1</name>
    <name type="ORF">AO090023000314</name>
</gene>
<evidence type="ECO:0000255" key="1">
    <source>
        <dbReference type="HAMAP-Rule" id="MF_03019"/>
    </source>
</evidence>
<keyword id="KW-0963">Cytoplasm</keyword>
<keyword id="KW-0223">Dioxygenase</keyword>
<keyword id="KW-0408">Iron</keyword>
<keyword id="KW-0479">Metal-binding</keyword>
<keyword id="KW-0560">Oxidoreductase</keyword>
<keyword id="KW-0662">Pyridine nucleotide biosynthesis</keyword>
<keyword id="KW-1185">Reference proteome</keyword>
<sequence length="192" mass="21548">MLPPALNIPKWLEANSHLLQPPVNNYCVYHPSSPATAGYTVMIVGGPNARTDYHINTTPEFFYQYRGSMLLRTVDTSASPPVFQDIPIHEGSLFLLPANTPHCPVRFKDTVGVVMEQPRAEGAVDILRWYCKSCGEIVWEKRFVCTDLGTQVKEVVEEFGADQEKRTCKACGTVAETKYKEGELVQPPRFLE</sequence>
<feature type="chain" id="PRO_0000361981" description="3-hydroxyanthranilate 3,4-dioxygenase 1">
    <location>
        <begin position="1"/>
        <end position="192"/>
    </location>
</feature>
<feature type="binding site" evidence="1">
    <location>
        <position position="50"/>
    </location>
    <ligand>
        <name>O2</name>
        <dbReference type="ChEBI" id="CHEBI:15379"/>
    </ligand>
</feature>
<feature type="binding site" evidence="1">
    <location>
        <position position="54"/>
    </location>
    <ligand>
        <name>Fe cation</name>
        <dbReference type="ChEBI" id="CHEBI:24875"/>
        <note>catalytic</note>
    </ligand>
</feature>
<feature type="binding site" evidence="1">
    <location>
        <position position="60"/>
    </location>
    <ligand>
        <name>Fe cation</name>
        <dbReference type="ChEBI" id="CHEBI:24875"/>
        <note>catalytic</note>
    </ligand>
</feature>
<feature type="binding site" evidence="1">
    <location>
        <position position="60"/>
    </location>
    <ligand>
        <name>substrate</name>
    </ligand>
</feature>
<feature type="binding site" evidence="1">
    <location>
        <position position="102"/>
    </location>
    <ligand>
        <name>Fe cation</name>
        <dbReference type="ChEBI" id="CHEBI:24875"/>
        <note>catalytic</note>
    </ligand>
</feature>
<feature type="binding site" evidence="1">
    <location>
        <position position="106"/>
    </location>
    <ligand>
        <name>substrate</name>
    </ligand>
</feature>
<feature type="binding site" evidence="1">
    <location>
        <position position="116"/>
    </location>
    <ligand>
        <name>substrate</name>
    </ligand>
</feature>
<feature type="binding site" evidence="1">
    <location>
        <position position="131"/>
    </location>
    <ligand>
        <name>a divalent metal cation</name>
        <dbReference type="ChEBI" id="CHEBI:60240"/>
    </ligand>
</feature>
<feature type="binding site" evidence="1">
    <location>
        <position position="134"/>
    </location>
    <ligand>
        <name>a divalent metal cation</name>
        <dbReference type="ChEBI" id="CHEBI:60240"/>
    </ligand>
</feature>
<feature type="binding site" evidence="1">
    <location>
        <position position="168"/>
    </location>
    <ligand>
        <name>a divalent metal cation</name>
        <dbReference type="ChEBI" id="CHEBI:60240"/>
    </ligand>
</feature>
<feature type="binding site" evidence="1">
    <location>
        <position position="171"/>
    </location>
    <ligand>
        <name>a divalent metal cation</name>
        <dbReference type="ChEBI" id="CHEBI:60240"/>
    </ligand>
</feature>
<accession>Q2UHT9</accession>
<organism>
    <name type="scientific">Aspergillus oryzae (strain ATCC 42149 / RIB 40)</name>
    <name type="common">Yellow koji mold</name>
    <dbReference type="NCBI Taxonomy" id="510516"/>
    <lineage>
        <taxon>Eukaryota</taxon>
        <taxon>Fungi</taxon>
        <taxon>Dikarya</taxon>
        <taxon>Ascomycota</taxon>
        <taxon>Pezizomycotina</taxon>
        <taxon>Eurotiomycetes</taxon>
        <taxon>Eurotiomycetidae</taxon>
        <taxon>Eurotiales</taxon>
        <taxon>Aspergillaceae</taxon>
        <taxon>Aspergillus</taxon>
        <taxon>Aspergillus subgen. Circumdati</taxon>
    </lineage>
</organism>
<proteinExistence type="inferred from homology"/>
<reference key="1">
    <citation type="journal article" date="2005" name="Nature">
        <title>Genome sequencing and analysis of Aspergillus oryzae.</title>
        <authorList>
            <person name="Machida M."/>
            <person name="Asai K."/>
            <person name="Sano M."/>
            <person name="Tanaka T."/>
            <person name="Kumagai T."/>
            <person name="Terai G."/>
            <person name="Kusumoto K."/>
            <person name="Arima T."/>
            <person name="Akita O."/>
            <person name="Kashiwagi Y."/>
            <person name="Abe K."/>
            <person name="Gomi K."/>
            <person name="Horiuchi H."/>
            <person name="Kitamoto K."/>
            <person name="Kobayashi T."/>
            <person name="Takeuchi M."/>
            <person name="Denning D.W."/>
            <person name="Galagan J.E."/>
            <person name="Nierman W.C."/>
            <person name="Yu J."/>
            <person name="Archer D.B."/>
            <person name="Bennett J.W."/>
            <person name="Bhatnagar D."/>
            <person name="Cleveland T.E."/>
            <person name="Fedorova N.D."/>
            <person name="Gotoh O."/>
            <person name="Horikawa H."/>
            <person name="Hosoyama A."/>
            <person name="Ichinomiya M."/>
            <person name="Igarashi R."/>
            <person name="Iwashita K."/>
            <person name="Juvvadi P.R."/>
            <person name="Kato M."/>
            <person name="Kato Y."/>
            <person name="Kin T."/>
            <person name="Kokubun A."/>
            <person name="Maeda H."/>
            <person name="Maeyama N."/>
            <person name="Maruyama J."/>
            <person name="Nagasaki H."/>
            <person name="Nakajima T."/>
            <person name="Oda K."/>
            <person name="Okada K."/>
            <person name="Paulsen I."/>
            <person name="Sakamoto K."/>
            <person name="Sawano T."/>
            <person name="Takahashi M."/>
            <person name="Takase K."/>
            <person name="Terabayashi Y."/>
            <person name="Wortman J.R."/>
            <person name="Yamada O."/>
            <person name="Yamagata Y."/>
            <person name="Anazawa H."/>
            <person name="Hata Y."/>
            <person name="Koide Y."/>
            <person name="Komori T."/>
            <person name="Koyama Y."/>
            <person name="Minetoki T."/>
            <person name="Suharnan S."/>
            <person name="Tanaka A."/>
            <person name="Isono K."/>
            <person name="Kuhara S."/>
            <person name="Ogasawara N."/>
            <person name="Kikuchi H."/>
        </authorList>
    </citation>
    <scope>NUCLEOTIDE SEQUENCE [LARGE SCALE GENOMIC DNA]</scope>
    <source>
        <strain>ATCC 42149 / RIB 40</strain>
    </source>
</reference>